<evidence type="ECO:0000255" key="1">
    <source>
        <dbReference type="HAMAP-Rule" id="MF_00017"/>
    </source>
</evidence>
<name>RECR_SALNS</name>
<comment type="function">
    <text evidence="1">May play a role in DNA repair. It seems to be involved in an RecBC-independent recombinational process of DNA repair. It may act with RecF and RecO.</text>
</comment>
<comment type="similarity">
    <text evidence="1">Belongs to the RecR family.</text>
</comment>
<reference key="1">
    <citation type="journal article" date="2011" name="J. Bacteriol.">
        <title>Comparative genomics of 28 Salmonella enterica isolates: evidence for CRISPR-mediated adaptive sublineage evolution.</title>
        <authorList>
            <person name="Fricke W.F."/>
            <person name="Mammel M.K."/>
            <person name="McDermott P.F."/>
            <person name="Tartera C."/>
            <person name="White D.G."/>
            <person name="Leclerc J.E."/>
            <person name="Ravel J."/>
            <person name="Cebula T.A."/>
        </authorList>
    </citation>
    <scope>NUCLEOTIDE SEQUENCE [LARGE SCALE GENOMIC DNA]</scope>
    <source>
        <strain>SL254</strain>
    </source>
</reference>
<accession>B4SWX9</accession>
<gene>
    <name evidence="1" type="primary">recR</name>
    <name type="ordered locus">SNSL254_A0537</name>
</gene>
<sequence>MQTSPLLTQLMEALRCLPGVGPKSAQRMAFTLLQRDRSGGMRLAQALTRAMSEIGHCADCRTFTEQDVCNICSNPRRQENGQICVVESPADIYAIEQTGQFSGRYFVLMGHLSPLDGIGPDDIGLDRLEQRLASEKISELILATNPTVEGEATANYIAELCAEAGVEASRIAHGVPVGGELEMVDGTTLSHSLAGRHKIIF</sequence>
<organism>
    <name type="scientific">Salmonella newport (strain SL254)</name>
    <dbReference type="NCBI Taxonomy" id="423368"/>
    <lineage>
        <taxon>Bacteria</taxon>
        <taxon>Pseudomonadati</taxon>
        <taxon>Pseudomonadota</taxon>
        <taxon>Gammaproteobacteria</taxon>
        <taxon>Enterobacterales</taxon>
        <taxon>Enterobacteriaceae</taxon>
        <taxon>Salmonella</taxon>
    </lineage>
</organism>
<keyword id="KW-0227">DNA damage</keyword>
<keyword id="KW-0233">DNA recombination</keyword>
<keyword id="KW-0234">DNA repair</keyword>
<keyword id="KW-0479">Metal-binding</keyword>
<keyword id="KW-0862">Zinc</keyword>
<keyword id="KW-0863">Zinc-finger</keyword>
<dbReference type="EMBL" id="CP001113">
    <property type="protein sequence ID" value="ACF63215.1"/>
    <property type="molecule type" value="Genomic_DNA"/>
</dbReference>
<dbReference type="RefSeq" id="WP_001195023.1">
    <property type="nucleotide sequence ID" value="NZ_CCMR01000003.1"/>
</dbReference>
<dbReference type="SMR" id="B4SWX9"/>
<dbReference type="KEGG" id="see:SNSL254_A0537"/>
<dbReference type="HOGENOM" id="CLU_060739_1_2_6"/>
<dbReference type="Proteomes" id="UP000008824">
    <property type="component" value="Chromosome"/>
</dbReference>
<dbReference type="GO" id="GO:0003677">
    <property type="term" value="F:DNA binding"/>
    <property type="evidence" value="ECO:0007669"/>
    <property type="project" value="UniProtKB-UniRule"/>
</dbReference>
<dbReference type="GO" id="GO:0008270">
    <property type="term" value="F:zinc ion binding"/>
    <property type="evidence" value="ECO:0007669"/>
    <property type="project" value="UniProtKB-KW"/>
</dbReference>
<dbReference type="GO" id="GO:0006310">
    <property type="term" value="P:DNA recombination"/>
    <property type="evidence" value="ECO:0007669"/>
    <property type="project" value="UniProtKB-UniRule"/>
</dbReference>
<dbReference type="GO" id="GO:0006281">
    <property type="term" value="P:DNA repair"/>
    <property type="evidence" value="ECO:0007669"/>
    <property type="project" value="UniProtKB-UniRule"/>
</dbReference>
<dbReference type="CDD" id="cd01025">
    <property type="entry name" value="TOPRIM_recR"/>
    <property type="match status" value="1"/>
</dbReference>
<dbReference type="FunFam" id="1.10.8.420:FF:000001">
    <property type="entry name" value="Recombination protein RecR"/>
    <property type="match status" value="1"/>
</dbReference>
<dbReference type="FunFam" id="3.40.1360.10:FF:000001">
    <property type="entry name" value="Recombination protein RecR"/>
    <property type="match status" value="1"/>
</dbReference>
<dbReference type="Gene3D" id="3.40.1360.10">
    <property type="match status" value="1"/>
</dbReference>
<dbReference type="Gene3D" id="6.10.250.240">
    <property type="match status" value="1"/>
</dbReference>
<dbReference type="Gene3D" id="1.10.8.420">
    <property type="entry name" value="RecR Domain 1"/>
    <property type="match status" value="1"/>
</dbReference>
<dbReference type="HAMAP" id="MF_00017">
    <property type="entry name" value="RecR"/>
    <property type="match status" value="1"/>
</dbReference>
<dbReference type="InterPro" id="IPR000093">
    <property type="entry name" value="DNA_Rcmb_RecR"/>
</dbReference>
<dbReference type="InterPro" id="IPR023627">
    <property type="entry name" value="Rcmb_RecR"/>
</dbReference>
<dbReference type="InterPro" id="IPR015967">
    <property type="entry name" value="Rcmb_RecR_Znf"/>
</dbReference>
<dbReference type="InterPro" id="IPR006171">
    <property type="entry name" value="TOPRIM_dom"/>
</dbReference>
<dbReference type="InterPro" id="IPR034137">
    <property type="entry name" value="TOPRIM_RecR"/>
</dbReference>
<dbReference type="NCBIfam" id="TIGR00615">
    <property type="entry name" value="recR"/>
    <property type="match status" value="1"/>
</dbReference>
<dbReference type="PANTHER" id="PTHR30446">
    <property type="entry name" value="RECOMBINATION PROTEIN RECR"/>
    <property type="match status" value="1"/>
</dbReference>
<dbReference type="PANTHER" id="PTHR30446:SF0">
    <property type="entry name" value="RECOMBINATION PROTEIN RECR"/>
    <property type="match status" value="1"/>
</dbReference>
<dbReference type="Pfam" id="PF21175">
    <property type="entry name" value="RecR_C"/>
    <property type="match status" value="1"/>
</dbReference>
<dbReference type="Pfam" id="PF21176">
    <property type="entry name" value="RecR_HhH"/>
    <property type="match status" value="1"/>
</dbReference>
<dbReference type="Pfam" id="PF02132">
    <property type="entry name" value="RecR_ZnF"/>
    <property type="match status" value="1"/>
</dbReference>
<dbReference type="Pfam" id="PF13662">
    <property type="entry name" value="Toprim_4"/>
    <property type="match status" value="1"/>
</dbReference>
<dbReference type="SMART" id="SM00493">
    <property type="entry name" value="TOPRIM"/>
    <property type="match status" value="1"/>
</dbReference>
<dbReference type="SUPFAM" id="SSF111304">
    <property type="entry name" value="Recombination protein RecR"/>
    <property type="match status" value="1"/>
</dbReference>
<dbReference type="PROSITE" id="PS01300">
    <property type="entry name" value="RECR"/>
    <property type="match status" value="1"/>
</dbReference>
<dbReference type="PROSITE" id="PS50880">
    <property type="entry name" value="TOPRIM"/>
    <property type="match status" value="1"/>
</dbReference>
<protein>
    <recommendedName>
        <fullName evidence="1">Recombination protein RecR</fullName>
    </recommendedName>
</protein>
<proteinExistence type="inferred from homology"/>
<feature type="chain" id="PRO_1000089767" description="Recombination protein RecR">
    <location>
        <begin position="1"/>
        <end position="201"/>
    </location>
</feature>
<feature type="domain" description="Toprim" evidence="1">
    <location>
        <begin position="81"/>
        <end position="176"/>
    </location>
</feature>
<feature type="zinc finger region" description="C4-type" evidence="1">
    <location>
        <begin position="57"/>
        <end position="72"/>
    </location>
</feature>